<keyword id="KW-0175">Coiled coil</keyword>
<keyword id="KW-0539">Nucleus</keyword>
<keyword id="KW-1185">Reference proteome</keyword>
<keyword id="KW-0677">Repeat</keyword>
<keyword id="KW-0690">Ribosome biogenesis</keyword>
<keyword id="KW-0698">rRNA processing</keyword>
<protein>
    <recommendedName>
        <fullName evidence="5">rRNA biogenesis protein RRP5</fullName>
    </recommendedName>
    <alternativeName>
        <fullName evidence="5">Ribosomal RNA-processing protein 5 homolog</fullName>
    </alternativeName>
</protein>
<organism evidence="8">
    <name type="scientific">Drosophila melanogaster</name>
    <name type="common">Fruit fly</name>
    <dbReference type="NCBI Taxonomy" id="7227"/>
    <lineage>
        <taxon>Eukaryota</taxon>
        <taxon>Metazoa</taxon>
        <taxon>Ecdysozoa</taxon>
        <taxon>Arthropoda</taxon>
        <taxon>Hexapoda</taxon>
        <taxon>Insecta</taxon>
        <taxon>Pterygota</taxon>
        <taxon>Neoptera</taxon>
        <taxon>Endopterygota</taxon>
        <taxon>Diptera</taxon>
        <taxon>Brachycera</taxon>
        <taxon>Muscomorpha</taxon>
        <taxon>Ephydroidea</taxon>
        <taxon>Drosophilidae</taxon>
        <taxon>Drosophila</taxon>
        <taxon>Sophophora</taxon>
    </lineage>
</organism>
<sequence length="1430" mass="159806">MVPNEKSFPRGGTIHSEVKTDDVSLNIVFGASQKKVKKAPKVKENLLSYETEEQNGQLEAFSAETLNMDTLQEDMLVMGVVKELTATALQIALPGRMFARTLVADISDAYTRVAKAAMSGDTSEYHDLTELFQLGRIVYGKAIKTEKLDTGRVSLLLSLKPADVHGNLHHKSIKKGFIFSGAVAEALEHGYVIESGVQGLQAFVPCEKPAQKLHVGQLAFLKVKTVHHDTHQSTCTCVQVEQDQLRIKSQNETNLDYILPGSIVKFKVAKHLKDGLKGSIMNESFSAYVNEHHLANALDTLDAYELNEDYNARVLYVMPLTKLVYLTLNLDIKTGAAVAKDQDEEEQEVEPIKVGSVVEKAKVLRLGSGGVVLLLNKKLKGIISYGSIRGNFKGNYDKDEVLSKYGRKTKHKVRILGYDVIESLYYCSDDPNVVNEKLFCLEDINAGDLVTAKIFKKDDKIKGWSVRIGKVNGILEQFYLAPNVRYDVGQSLKCRVLEVNAERKICYVSNRAEYLGKGIKILTDYASAHVGNVYMGTVVRCEDTYVLVKFGNGIKGVLHRQNLKENSSFFEGQTTKFRILTRNKDQITLTLPEDKFQLGEICPVEITNALDAGLEVKITFAAEDDEEDEDGNPKLEEFVGLIPLRLLSDHLELLHAQMRVHPAGSYTDAACIMQNIFSLRDVPYFSGQLTKDWQSVQVGDIIRSYVKHATDQVVDLMVCVRNYNKPVKVHVKMLRLNAVKNAPVELVPEQLLWVKVLSKEVETKTLTVSAKLTDVWSGDLSDTAKLVEGYLNEVAQIKAGLEEASAPISKYSVGEKINVVFKGIDATTNDWVYTVEGNGKVSALLLSSLVGTAKAPEMGSKHEAVILWIEYSSDVLLISNKKLDIAHISPSGELSTNLIGKAGMKAKVLLKLESVAVCSLKKGTNPLVICPIRLHPNDIENSGSAELRQGDFCNIAFIHDKLHIAVPETVWRLWRGVKRTAGTEVAPVKAKKAKVEESPKQKKTTIEETSAQKKVKAKAKVETKTEAKAIPTKRKAEVVEKITNGQKKTQPLTNGIVKEKPKQNGKLFFEDKTPAKNAKSETPKSNGAEGKSRLPGVSSFWEDDVNQSKEGSSDEDEELNVAETQKNAAKKKRLSAKEKAKAEIKEEQRLREIEERNADPKARLETIDQYERLVIAQPNNSISWLKYIAFLLSNTEIEKARALARRAISTISFRETQELRNMWSALLNMELVYSNNFDDVLKEALNCNDPLEIYISVVDILKKNKRKDRLSSVLTTVLNKFKTELRVWPVAAEAYFWLGKSDQVHNLLQRALRALPNQEHIPCIVSFAKLYAKHDNNDMAQTLLDDVVTSYPKRIDIWSVYVDMLIKAGLIDSARNVLERAVVQKLKPNKMQVIYKKYLQLEENHGTDATVAKVKQQAEQWVKNYAKTVK</sequence>
<proteinExistence type="evidence at transcript level"/>
<dbReference type="EMBL" id="AE014297">
    <property type="protein sequence ID" value="AAF56280.2"/>
    <property type="molecule type" value="Genomic_DNA"/>
</dbReference>
<dbReference type="EMBL" id="AY061461">
    <property type="protein sequence ID" value="AAL29009.1"/>
    <property type="molecule type" value="mRNA"/>
</dbReference>
<dbReference type="RefSeq" id="NP_651245.1">
    <property type="nucleotide sequence ID" value="NM_142988.4"/>
</dbReference>
<dbReference type="SMR" id="Q9VC94"/>
<dbReference type="FunCoup" id="Q9VC94">
    <property type="interactions" value="2493"/>
</dbReference>
<dbReference type="IntAct" id="Q9VC94">
    <property type="interactions" value="20"/>
</dbReference>
<dbReference type="STRING" id="7227.FBpp0084016"/>
<dbReference type="PaxDb" id="7227-FBpp0084016"/>
<dbReference type="DNASU" id="42899"/>
<dbReference type="EnsemblMetazoa" id="FBtr0084632">
    <property type="protein sequence ID" value="FBpp0084016"/>
    <property type="gene ID" value="FBgn0039182"/>
</dbReference>
<dbReference type="GeneID" id="42899"/>
<dbReference type="KEGG" id="dme:Dmel_CG5728"/>
<dbReference type="UCSC" id="CG5728-RA">
    <property type="organism name" value="d. melanogaster"/>
</dbReference>
<dbReference type="AGR" id="FB:FBgn0039182"/>
<dbReference type="CTD" id="42899"/>
<dbReference type="FlyBase" id="FBgn0039182">
    <property type="gene designation" value="Rrp5"/>
</dbReference>
<dbReference type="VEuPathDB" id="VectorBase:FBgn0039182"/>
<dbReference type="eggNOG" id="KOG1070">
    <property type="taxonomic scope" value="Eukaryota"/>
</dbReference>
<dbReference type="GeneTree" id="ENSGT00390000012228"/>
<dbReference type="HOGENOM" id="CLU_000845_0_1_1"/>
<dbReference type="InParanoid" id="Q9VC94"/>
<dbReference type="OMA" id="EAACIMQ"/>
<dbReference type="OrthoDB" id="412781at2759"/>
<dbReference type="Reactome" id="R-DME-6791226">
    <property type="pathway name" value="Major pathway of rRNA processing in the nucleolus and cytosol"/>
</dbReference>
<dbReference type="BioGRID-ORCS" id="42899">
    <property type="hits" value="1 hit in 1 CRISPR screen"/>
</dbReference>
<dbReference type="GenomeRNAi" id="42899"/>
<dbReference type="PRO" id="PR:Q9VC94"/>
<dbReference type="Proteomes" id="UP000000803">
    <property type="component" value="Chromosome 3R"/>
</dbReference>
<dbReference type="Bgee" id="FBgn0039182">
    <property type="expression patterns" value="Expressed in male accessory gland secondary cell (Drosophila) in male reproductive gland and 107 other cell types or tissues"/>
</dbReference>
<dbReference type="GO" id="GO:0005730">
    <property type="term" value="C:nucleolus"/>
    <property type="evidence" value="ECO:0000314"/>
    <property type="project" value="FlyBase"/>
</dbReference>
<dbReference type="GO" id="GO:0005634">
    <property type="term" value="C:nucleus"/>
    <property type="evidence" value="ECO:0000305"/>
    <property type="project" value="FlyBase"/>
</dbReference>
<dbReference type="GO" id="GO:0032040">
    <property type="term" value="C:small-subunit processome"/>
    <property type="evidence" value="ECO:0000318"/>
    <property type="project" value="GO_Central"/>
</dbReference>
<dbReference type="GO" id="GO:0003723">
    <property type="term" value="F:RNA binding"/>
    <property type="evidence" value="ECO:0000318"/>
    <property type="project" value="GO_Central"/>
</dbReference>
<dbReference type="GO" id="GO:0000381">
    <property type="term" value="P:regulation of alternative mRNA splicing, via spliceosome"/>
    <property type="evidence" value="ECO:0007001"/>
    <property type="project" value="FlyBase"/>
</dbReference>
<dbReference type="GO" id="GO:0006364">
    <property type="term" value="P:rRNA processing"/>
    <property type="evidence" value="ECO:0000314"/>
    <property type="project" value="FlyBase"/>
</dbReference>
<dbReference type="CDD" id="cd05693">
    <property type="entry name" value="S1_Rrp5_repeat_hs1_sc1"/>
    <property type="match status" value="1"/>
</dbReference>
<dbReference type="FunFam" id="2.40.50.140:FF:000196">
    <property type="entry name" value="rRNA biogenesis protein RRP5"/>
    <property type="match status" value="1"/>
</dbReference>
<dbReference type="Gene3D" id="2.40.50.140">
    <property type="entry name" value="Nucleic acid-binding proteins"/>
    <property type="match status" value="2"/>
</dbReference>
<dbReference type="Gene3D" id="1.25.40.10">
    <property type="entry name" value="Tetratricopeptide repeat domain"/>
    <property type="match status" value="2"/>
</dbReference>
<dbReference type="InterPro" id="IPR003107">
    <property type="entry name" value="HAT"/>
</dbReference>
<dbReference type="InterPro" id="IPR055430">
    <property type="entry name" value="HAT_Syf1_CNRKL1_C"/>
</dbReference>
<dbReference type="InterPro" id="IPR012340">
    <property type="entry name" value="NA-bd_OB-fold"/>
</dbReference>
<dbReference type="InterPro" id="IPR045209">
    <property type="entry name" value="Rrp5"/>
</dbReference>
<dbReference type="InterPro" id="IPR048059">
    <property type="entry name" value="Rrp5_S1_rpt_hs1_sc1"/>
</dbReference>
<dbReference type="InterPro" id="IPR003029">
    <property type="entry name" value="S1_domain"/>
</dbReference>
<dbReference type="InterPro" id="IPR011990">
    <property type="entry name" value="TPR-like_helical_dom_sf"/>
</dbReference>
<dbReference type="PANTHER" id="PTHR23270">
    <property type="entry name" value="PROGRAMMED CELL DEATH PROTEIN 11 PRE-RRNA PROCESSING PROTEIN RRP5"/>
    <property type="match status" value="1"/>
</dbReference>
<dbReference type="PANTHER" id="PTHR23270:SF10">
    <property type="entry name" value="PROTEIN RRP5 HOMOLOG"/>
    <property type="match status" value="1"/>
</dbReference>
<dbReference type="Pfam" id="PF23231">
    <property type="entry name" value="HAT_Syf1_CNRKL1_C"/>
    <property type="match status" value="1"/>
</dbReference>
<dbReference type="Pfam" id="PF00575">
    <property type="entry name" value="S1"/>
    <property type="match status" value="1"/>
</dbReference>
<dbReference type="SMART" id="SM00386">
    <property type="entry name" value="HAT"/>
    <property type="match status" value="5"/>
</dbReference>
<dbReference type="SMART" id="SM00316">
    <property type="entry name" value="S1"/>
    <property type="match status" value="6"/>
</dbReference>
<dbReference type="SUPFAM" id="SSF50249">
    <property type="entry name" value="Nucleic acid-binding proteins"/>
    <property type="match status" value="3"/>
</dbReference>
<dbReference type="SUPFAM" id="SSF48452">
    <property type="entry name" value="TPR-like"/>
    <property type="match status" value="1"/>
</dbReference>
<dbReference type="PROSITE" id="PS50126">
    <property type="entry name" value="S1"/>
    <property type="match status" value="2"/>
</dbReference>
<name>RRP5_DROME</name>
<feature type="chain" id="PRO_0000459995" description="rRNA biogenesis protein RRP5">
    <location>
        <begin position="1"/>
        <end position="1430"/>
    </location>
</feature>
<feature type="domain" description="S1 motif 1" evidence="2">
    <location>
        <begin position="74"/>
        <end position="160"/>
    </location>
</feature>
<feature type="domain" description="S1 motif 2" evidence="2">
    <location>
        <begin position="176"/>
        <end position="238"/>
    </location>
</feature>
<feature type="domain" description="S1 motif 3" evidence="2">
    <location>
        <begin position="261"/>
        <end position="329"/>
    </location>
</feature>
<feature type="domain" description="S1 motif 4" evidence="2">
    <location>
        <begin position="447"/>
        <end position="511"/>
    </location>
</feature>
<feature type="domain" description="S1 motif 5" evidence="2">
    <location>
        <begin position="531"/>
        <end position="592"/>
    </location>
</feature>
<feature type="domain" description="S1 motif 6" evidence="1">
    <location>
        <begin position="697"/>
        <end position="771"/>
    </location>
</feature>
<feature type="repeat" description="HAT 1" evidence="1">
    <location>
        <begin position="1161"/>
        <end position="1193"/>
    </location>
</feature>
<feature type="repeat" description="HAT 2" evidence="1">
    <location>
        <begin position="1195"/>
        <end position="1232"/>
    </location>
</feature>
<feature type="repeat" description="HAT 3" evidence="1">
    <location>
        <begin position="1265"/>
        <end position="1297"/>
    </location>
</feature>
<feature type="repeat" description="HAT 4" evidence="1">
    <location>
        <begin position="1299"/>
        <end position="1333"/>
    </location>
</feature>
<feature type="repeat" description="HAT 5" evidence="1">
    <location>
        <begin position="1335"/>
        <end position="1367"/>
    </location>
</feature>
<feature type="repeat" description="HAT 6" evidence="1">
    <location>
        <begin position="1369"/>
        <end position="1404"/>
    </location>
</feature>
<feature type="region of interest" description="Disordered" evidence="3">
    <location>
        <begin position="1041"/>
        <end position="1145"/>
    </location>
</feature>
<feature type="coiled-coil region" evidence="1">
    <location>
        <begin position="1119"/>
        <end position="1157"/>
    </location>
</feature>
<feature type="compositionally biased region" description="Polar residues" evidence="3">
    <location>
        <begin position="1043"/>
        <end position="1053"/>
    </location>
</feature>
<feature type="compositionally biased region" description="Basic and acidic residues" evidence="3">
    <location>
        <begin position="1057"/>
        <end position="1082"/>
    </location>
</feature>
<feature type="compositionally biased region" description="Basic and acidic residues" evidence="3">
    <location>
        <begin position="1135"/>
        <end position="1145"/>
    </location>
</feature>
<gene>
    <name evidence="7" type="primary">Rrp5</name>
    <name evidence="7" type="ORF">CG5728</name>
</gene>
<accession>Q9VC94</accession>
<accession>Q95RD5</accession>
<comment type="function">
    <text evidence="4">Involved in rRNA processing or maturation during ribosome biogenesis.</text>
</comment>
<comment type="subcellular location">
    <subcellularLocation>
        <location evidence="4">Nucleus</location>
        <location evidence="4">Nucleolus</location>
    </subcellularLocation>
</comment>
<comment type="disruption phenotype">
    <text evidence="4">Lethal in 2nd instar larval stage (PubMed:35628496). Enlarged nucleoli in larval salivary gland cells (PubMed:35628496).</text>
</comment>
<evidence type="ECO:0000255" key="1"/>
<evidence type="ECO:0000255" key="2">
    <source>
        <dbReference type="PROSITE-ProRule" id="PRU00180"/>
    </source>
</evidence>
<evidence type="ECO:0000256" key="3">
    <source>
        <dbReference type="SAM" id="MobiDB-lite"/>
    </source>
</evidence>
<evidence type="ECO:0000269" key="4">
    <source>
    </source>
</evidence>
<evidence type="ECO:0000305" key="5"/>
<evidence type="ECO:0000312" key="6">
    <source>
        <dbReference type="EMBL" id="AAL29009.1"/>
    </source>
</evidence>
<evidence type="ECO:0000312" key="7">
    <source>
        <dbReference type="FlyBase" id="FBgn0039182"/>
    </source>
</evidence>
<evidence type="ECO:0000312" key="8">
    <source>
        <dbReference type="Proteomes" id="UP000000803"/>
    </source>
</evidence>
<reference evidence="8" key="1">
    <citation type="journal article" date="2000" name="Science">
        <title>The genome sequence of Drosophila melanogaster.</title>
        <authorList>
            <person name="Adams M.D."/>
            <person name="Celniker S.E."/>
            <person name="Holt R.A."/>
            <person name="Evans C.A."/>
            <person name="Gocayne J.D."/>
            <person name="Amanatides P.G."/>
            <person name="Scherer S.E."/>
            <person name="Li P.W."/>
            <person name="Hoskins R.A."/>
            <person name="Galle R.F."/>
            <person name="George R.A."/>
            <person name="Lewis S.E."/>
            <person name="Richards S."/>
            <person name="Ashburner M."/>
            <person name="Henderson S.N."/>
            <person name="Sutton G.G."/>
            <person name="Wortman J.R."/>
            <person name="Yandell M.D."/>
            <person name="Zhang Q."/>
            <person name="Chen L.X."/>
            <person name="Brandon R.C."/>
            <person name="Rogers Y.-H.C."/>
            <person name="Blazej R.G."/>
            <person name="Champe M."/>
            <person name="Pfeiffer B.D."/>
            <person name="Wan K.H."/>
            <person name="Doyle C."/>
            <person name="Baxter E.G."/>
            <person name="Helt G."/>
            <person name="Nelson C.R."/>
            <person name="Miklos G.L.G."/>
            <person name="Abril J.F."/>
            <person name="Agbayani A."/>
            <person name="An H.-J."/>
            <person name="Andrews-Pfannkoch C."/>
            <person name="Baldwin D."/>
            <person name="Ballew R.M."/>
            <person name="Basu A."/>
            <person name="Baxendale J."/>
            <person name="Bayraktaroglu L."/>
            <person name="Beasley E.M."/>
            <person name="Beeson K.Y."/>
            <person name="Benos P.V."/>
            <person name="Berman B.P."/>
            <person name="Bhandari D."/>
            <person name="Bolshakov S."/>
            <person name="Borkova D."/>
            <person name="Botchan M.R."/>
            <person name="Bouck J."/>
            <person name="Brokstein P."/>
            <person name="Brottier P."/>
            <person name="Burtis K.C."/>
            <person name="Busam D.A."/>
            <person name="Butler H."/>
            <person name="Cadieu E."/>
            <person name="Center A."/>
            <person name="Chandra I."/>
            <person name="Cherry J.M."/>
            <person name="Cawley S."/>
            <person name="Dahlke C."/>
            <person name="Davenport L.B."/>
            <person name="Davies P."/>
            <person name="de Pablos B."/>
            <person name="Delcher A."/>
            <person name="Deng Z."/>
            <person name="Mays A.D."/>
            <person name="Dew I."/>
            <person name="Dietz S.M."/>
            <person name="Dodson K."/>
            <person name="Doup L.E."/>
            <person name="Downes M."/>
            <person name="Dugan-Rocha S."/>
            <person name="Dunkov B.C."/>
            <person name="Dunn P."/>
            <person name="Durbin K.J."/>
            <person name="Evangelista C.C."/>
            <person name="Ferraz C."/>
            <person name="Ferriera S."/>
            <person name="Fleischmann W."/>
            <person name="Fosler C."/>
            <person name="Gabrielian A.E."/>
            <person name="Garg N.S."/>
            <person name="Gelbart W.M."/>
            <person name="Glasser K."/>
            <person name="Glodek A."/>
            <person name="Gong F."/>
            <person name="Gorrell J.H."/>
            <person name="Gu Z."/>
            <person name="Guan P."/>
            <person name="Harris M."/>
            <person name="Harris N.L."/>
            <person name="Harvey D.A."/>
            <person name="Heiman T.J."/>
            <person name="Hernandez J.R."/>
            <person name="Houck J."/>
            <person name="Hostin D."/>
            <person name="Houston K.A."/>
            <person name="Howland T.J."/>
            <person name="Wei M.-H."/>
            <person name="Ibegwam C."/>
            <person name="Jalali M."/>
            <person name="Kalush F."/>
            <person name="Karpen G.H."/>
            <person name="Ke Z."/>
            <person name="Kennison J.A."/>
            <person name="Ketchum K.A."/>
            <person name="Kimmel B.E."/>
            <person name="Kodira C.D."/>
            <person name="Kraft C.L."/>
            <person name="Kravitz S."/>
            <person name="Kulp D."/>
            <person name="Lai Z."/>
            <person name="Lasko P."/>
            <person name="Lei Y."/>
            <person name="Levitsky A.A."/>
            <person name="Li J.H."/>
            <person name="Li Z."/>
            <person name="Liang Y."/>
            <person name="Lin X."/>
            <person name="Liu X."/>
            <person name="Mattei B."/>
            <person name="McIntosh T.C."/>
            <person name="McLeod M.P."/>
            <person name="McPherson D."/>
            <person name="Merkulov G."/>
            <person name="Milshina N.V."/>
            <person name="Mobarry C."/>
            <person name="Morris J."/>
            <person name="Moshrefi A."/>
            <person name="Mount S.M."/>
            <person name="Moy M."/>
            <person name="Murphy B."/>
            <person name="Murphy L."/>
            <person name="Muzny D.M."/>
            <person name="Nelson D.L."/>
            <person name="Nelson D.R."/>
            <person name="Nelson K.A."/>
            <person name="Nixon K."/>
            <person name="Nusskern D.R."/>
            <person name="Pacleb J.M."/>
            <person name="Palazzolo M."/>
            <person name="Pittman G.S."/>
            <person name="Pan S."/>
            <person name="Pollard J."/>
            <person name="Puri V."/>
            <person name="Reese M.G."/>
            <person name="Reinert K."/>
            <person name="Remington K."/>
            <person name="Saunders R.D.C."/>
            <person name="Scheeler F."/>
            <person name="Shen H."/>
            <person name="Shue B.C."/>
            <person name="Siden-Kiamos I."/>
            <person name="Simpson M."/>
            <person name="Skupski M.P."/>
            <person name="Smith T.J."/>
            <person name="Spier E."/>
            <person name="Spradling A.C."/>
            <person name="Stapleton M."/>
            <person name="Strong R."/>
            <person name="Sun E."/>
            <person name="Svirskas R."/>
            <person name="Tector C."/>
            <person name="Turner R."/>
            <person name="Venter E."/>
            <person name="Wang A.H."/>
            <person name="Wang X."/>
            <person name="Wang Z.-Y."/>
            <person name="Wassarman D.A."/>
            <person name="Weinstock G.M."/>
            <person name="Weissenbach J."/>
            <person name="Williams S.M."/>
            <person name="Woodage T."/>
            <person name="Worley K.C."/>
            <person name="Wu D."/>
            <person name="Yang S."/>
            <person name="Yao Q.A."/>
            <person name="Ye J."/>
            <person name="Yeh R.-F."/>
            <person name="Zaveri J.S."/>
            <person name="Zhan M."/>
            <person name="Zhang G."/>
            <person name="Zhao Q."/>
            <person name="Zheng L."/>
            <person name="Zheng X.H."/>
            <person name="Zhong F.N."/>
            <person name="Zhong W."/>
            <person name="Zhou X."/>
            <person name="Zhu S.C."/>
            <person name="Zhu X."/>
            <person name="Smith H.O."/>
            <person name="Gibbs R.A."/>
            <person name="Myers E.W."/>
            <person name="Rubin G.M."/>
            <person name="Venter J.C."/>
        </authorList>
    </citation>
    <scope>NUCLEOTIDE SEQUENCE [LARGE SCALE GENOMIC DNA]</scope>
    <source>
        <strain evidence="8">Berkeley</strain>
    </source>
</reference>
<reference evidence="8" key="2">
    <citation type="journal article" date="2002" name="Genome Biol.">
        <title>Annotation of the Drosophila melanogaster euchromatic genome: a systematic review.</title>
        <authorList>
            <person name="Misra S."/>
            <person name="Crosby M.A."/>
            <person name="Mungall C.J."/>
            <person name="Matthews B.B."/>
            <person name="Campbell K.S."/>
            <person name="Hradecky P."/>
            <person name="Huang Y."/>
            <person name="Kaminker J.S."/>
            <person name="Millburn G.H."/>
            <person name="Prochnik S.E."/>
            <person name="Smith C.D."/>
            <person name="Tupy J.L."/>
            <person name="Whitfield E.J."/>
            <person name="Bayraktaroglu L."/>
            <person name="Berman B.P."/>
            <person name="Bettencourt B.R."/>
            <person name="Celniker S.E."/>
            <person name="de Grey A.D.N.J."/>
            <person name="Drysdale R.A."/>
            <person name="Harris N.L."/>
            <person name="Richter J."/>
            <person name="Russo S."/>
            <person name="Schroeder A.J."/>
            <person name="Shu S.Q."/>
            <person name="Stapleton M."/>
            <person name="Yamada C."/>
            <person name="Ashburner M."/>
            <person name="Gelbart W.M."/>
            <person name="Rubin G.M."/>
            <person name="Lewis S.E."/>
        </authorList>
    </citation>
    <scope>GENOME REANNOTATION</scope>
    <source>
        <strain evidence="8">Berkeley</strain>
    </source>
</reference>
<reference evidence="6" key="3">
    <citation type="journal article" date="2002" name="Genome Biol.">
        <title>A Drosophila full-length cDNA resource.</title>
        <authorList>
            <person name="Stapleton M."/>
            <person name="Carlson J.W."/>
            <person name="Brokstein P."/>
            <person name="Yu C."/>
            <person name="Champe M."/>
            <person name="George R.A."/>
            <person name="Guarin H."/>
            <person name="Kronmiller B."/>
            <person name="Pacleb J.M."/>
            <person name="Park S."/>
            <person name="Wan K.H."/>
            <person name="Rubin G.M."/>
            <person name="Celniker S.E."/>
        </authorList>
    </citation>
    <scope>NUCLEOTIDE SEQUENCE [LARGE SCALE MRNA]</scope>
    <source>
        <strain evidence="6">Berkeley</strain>
        <tissue evidence="6">Embryo</tissue>
    </source>
</reference>
<reference evidence="5" key="4">
    <citation type="journal article" date="2022" name="Int. J. Mol. Sci.">
        <title>The DEAD-Box Protein Rok1 Coordinates Ribosomal RNA Processing in Association with Rrp5 in Drosophila.</title>
        <authorList>
            <person name="Chen J."/>
            <person name="Huang Y."/>
            <person name="Zhang K."/>
        </authorList>
    </citation>
    <scope>FUNCTION</scope>
    <scope>SUBCELLULAR LOCATION</scope>
    <scope>DISRUPTION PHENOTYPE</scope>
</reference>